<sequence length="44" mass="4688">HNDLIRAGLTVCLSENRKRLTCSGLLNMAGSVCCKVDTSCCSSQ</sequence>
<reference key="1">
    <citation type="journal article" date="2006" name="Biochimie">
        <title>Analysis of expressed sequence tags from the venom ducts of Conus striatus: focusing on the expression profile of conotoxins.</title>
        <authorList>
            <person name="Pi C."/>
            <person name="Liu Y."/>
            <person name="Peng C."/>
            <person name="Jiang X."/>
            <person name="Liu J."/>
            <person name="Xu B."/>
            <person name="Yu X."/>
            <person name="Yu Y."/>
            <person name="Jiang X."/>
            <person name="Wang L."/>
            <person name="Dong M."/>
            <person name="Chen S."/>
            <person name="Xu A.-L."/>
        </authorList>
    </citation>
    <scope>NUCLEOTIDE SEQUENCE [MRNA]</scope>
    <source>
        <tissue>Venom duct</tissue>
    </source>
</reference>
<comment type="subcellular location">
    <subcellularLocation>
        <location evidence="1">Secreted</location>
    </subcellularLocation>
</comment>
<comment type="tissue specificity">
    <text>Expressed by the venom duct.</text>
</comment>
<comment type="domain">
    <text>The cysteine framework is XVIII (C-C-CC-CC).</text>
</comment>
<comment type="PTM">
    <text evidence="2">Contains 3 disulfide bonds.</text>
</comment>
<name>C51_CONST</name>
<keyword id="KW-1015">Disulfide bond</keyword>
<keyword id="KW-0964">Secreted</keyword>
<keyword id="KW-0800">Toxin</keyword>
<dbReference type="EMBL" id="DQ117944">
    <property type="protein sequence ID" value="AAZ38458.1"/>
    <property type="molecule type" value="mRNA"/>
</dbReference>
<dbReference type="ConoServer" id="1108">
    <property type="toxin name" value="S18.1 precursor"/>
</dbReference>
<dbReference type="GO" id="GO:0005576">
    <property type="term" value="C:extracellular region"/>
    <property type="evidence" value="ECO:0007669"/>
    <property type="project" value="UniProtKB-SubCell"/>
</dbReference>
<dbReference type="GO" id="GO:0090729">
    <property type="term" value="F:toxin activity"/>
    <property type="evidence" value="ECO:0007669"/>
    <property type="project" value="UniProtKB-KW"/>
</dbReference>
<feature type="peptide" id="PRO_0000345113" description="Conotoxin S5.1">
    <location>
        <begin position="1" status="less than"/>
        <end position="44"/>
    </location>
</feature>
<feature type="non-terminal residue">
    <location>
        <position position="1"/>
    </location>
</feature>
<proteinExistence type="evidence at transcript level"/>
<evidence type="ECO:0000250" key="1"/>
<evidence type="ECO:0000305" key="2"/>
<accession>Q45RU8</accession>
<organism>
    <name type="scientific">Conus striatus</name>
    <name type="common">Striated cone</name>
    <dbReference type="NCBI Taxonomy" id="6493"/>
    <lineage>
        <taxon>Eukaryota</taxon>
        <taxon>Metazoa</taxon>
        <taxon>Spiralia</taxon>
        <taxon>Lophotrochozoa</taxon>
        <taxon>Mollusca</taxon>
        <taxon>Gastropoda</taxon>
        <taxon>Caenogastropoda</taxon>
        <taxon>Neogastropoda</taxon>
        <taxon>Conoidea</taxon>
        <taxon>Conidae</taxon>
        <taxon>Conus</taxon>
        <taxon>Pionoconus</taxon>
    </lineage>
</organism>
<protein>
    <recommendedName>
        <fullName>Conotoxin S5.1</fullName>
    </recommendedName>
</protein>